<accession>P54650</accession>
<protein>
    <recommendedName>
        <fullName>Chaperone protein HtpG</fullName>
    </recommendedName>
    <alternativeName>
        <fullName>Heat shock protein HtpG</fullName>
    </alternativeName>
    <alternativeName>
        <fullName>High temperature protein G</fullName>
    </alternativeName>
</protein>
<name>HTPG_ALIFS</name>
<sequence length="391" mass="44516">MSEQTANKETRGFQSEVKQLLHLMIHSLYSNKEIFLRELISNASDASDKLRFKALSNGDLYEGNADLGVKLSFNEAANTLTISDNGIGMSREDVIEHLGTIAKSGTADFFSKLSEDQSKDSQLIGQFGVGFYSAFIVADAVTVRTRAAGSEKDQGVQWHSEGEGDYTIEDITKESRGTDIILHMREEGKEFLNEWRLKEVIGKYSDHIGIPVSIWAVEKDEEGKDKEGKWEQVNKAQALWTRSKSDIEDAEYQEFYKHVSHDFADPLTWSHNKVEGKNDYTSLLYIPAKAPFDMMNRDHKSGLKLYVQRVFIMDDAEQFMPTYLRFVKGLIDSNDLPLNVSREILQDNKVTQSLRSACTKRVLGMLEKMAKKDDEKYLTFWKQFGQVLKEG</sequence>
<reference key="1">
    <citation type="journal article" date="1994" name="J. Bacteriol.">
        <title>The light organ symbiont Vibrio fischeri possesses a homolog of the Vibrio cholerae transmembrane transcriptional activator ToxR.</title>
        <authorList>
            <person name="Katiyar S.K."/>
            <person name="Edlind T.D."/>
        </authorList>
    </citation>
    <scope>NUCLEOTIDE SEQUENCE [GENOMIC DNA]</scope>
    <source>
        <strain>MJ-A1</strain>
    </source>
</reference>
<proteinExistence type="inferred from homology"/>
<gene>
    <name type="primary">htpG</name>
</gene>
<comment type="function">
    <text evidence="1">Molecular chaperone. Has ATPase activity (By similarity).</text>
</comment>
<comment type="subunit">
    <text evidence="1">Homodimer.</text>
</comment>
<comment type="subcellular location">
    <subcellularLocation>
        <location evidence="1">Cytoplasm</location>
    </subcellularLocation>
</comment>
<comment type="similarity">
    <text evidence="2">Belongs to the heat shock protein 90 family.</text>
</comment>
<dbReference type="EMBL" id="L29053">
    <property type="protein sequence ID" value="AAA20501.1"/>
    <property type="molecule type" value="Genomic_DNA"/>
</dbReference>
<dbReference type="SMR" id="P54650"/>
<dbReference type="GO" id="GO:0005737">
    <property type="term" value="C:cytoplasm"/>
    <property type="evidence" value="ECO:0007669"/>
    <property type="project" value="UniProtKB-SubCell"/>
</dbReference>
<dbReference type="GO" id="GO:0005524">
    <property type="term" value="F:ATP binding"/>
    <property type="evidence" value="ECO:0007669"/>
    <property type="project" value="UniProtKB-KW"/>
</dbReference>
<dbReference type="GO" id="GO:0016887">
    <property type="term" value="F:ATP hydrolysis activity"/>
    <property type="evidence" value="ECO:0007669"/>
    <property type="project" value="InterPro"/>
</dbReference>
<dbReference type="GO" id="GO:0140662">
    <property type="term" value="F:ATP-dependent protein folding chaperone"/>
    <property type="evidence" value="ECO:0007669"/>
    <property type="project" value="InterPro"/>
</dbReference>
<dbReference type="GO" id="GO:0051082">
    <property type="term" value="F:unfolded protein binding"/>
    <property type="evidence" value="ECO:0007669"/>
    <property type="project" value="InterPro"/>
</dbReference>
<dbReference type="CDD" id="cd16927">
    <property type="entry name" value="HATPase_Hsp90-like"/>
    <property type="match status" value="1"/>
</dbReference>
<dbReference type="FunFam" id="3.30.230.80:FF:000002">
    <property type="entry name" value="Molecular chaperone HtpG"/>
    <property type="match status" value="1"/>
</dbReference>
<dbReference type="FunFam" id="3.30.565.10:FF:000009">
    <property type="entry name" value="Molecular chaperone HtpG"/>
    <property type="match status" value="1"/>
</dbReference>
<dbReference type="Gene3D" id="3.30.230.80">
    <property type="match status" value="1"/>
</dbReference>
<dbReference type="Gene3D" id="3.30.565.10">
    <property type="entry name" value="Histidine kinase-like ATPase, C-terminal domain"/>
    <property type="match status" value="1"/>
</dbReference>
<dbReference type="InterPro" id="IPR036890">
    <property type="entry name" value="HATPase_C_sf"/>
</dbReference>
<dbReference type="InterPro" id="IPR019805">
    <property type="entry name" value="Heat_shock_protein_90_CS"/>
</dbReference>
<dbReference type="InterPro" id="IPR001404">
    <property type="entry name" value="Hsp90_fam"/>
</dbReference>
<dbReference type="InterPro" id="IPR020575">
    <property type="entry name" value="Hsp90_N"/>
</dbReference>
<dbReference type="InterPro" id="IPR020568">
    <property type="entry name" value="Ribosomal_Su5_D2-typ_SF"/>
</dbReference>
<dbReference type="NCBIfam" id="NF003555">
    <property type="entry name" value="PRK05218.1"/>
    <property type="match status" value="1"/>
</dbReference>
<dbReference type="PANTHER" id="PTHR11528">
    <property type="entry name" value="HEAT SHOCK PROTEIN 90 FAMILY MEMBER"/>
    <property type="match status" value="1"/>
</dbReference>
<dbReference type="Pfam" id="PF13589">
    <property type="entry name" value="HATPase_c_3"/>
    <property type="match status" value="1"/>
</dbReference>
<dbReference type="Pfam" id="PF00183">
    <property type="entry name" value="HSP90"/>
    <property type="match status" value="1"/>
</dbReference>
<dbReference type="PRINTS" id="PR00775">
    <property type="entry name" value="HEATSHOCK90"/>
</dbReference>
<dbReference type="SMART" id="SM00387">
    <property type="entry name" value="HATPase_c"/>
    <property type="match status" value="1"/>
</dbReference>
<dbReference type="SUPFAM" id="SSF55874">
    <property type="entry name" value="ATPase domain of HSP90 chaperone/DNA topoisomerase II/histidine kinase"/>
    <property type="match status" value="1"/>
</dbReference>
<dbReference type="SUPFAM" id="SSF54211">
    <property type="entry name" value="Ribosomal protein S5 domain 2-like"/>
    <property type="match status" value="1"/>
</dbReference>
<dbReference type="PROSITE" id="PS00298">
    <property type="entry name" value="HSP90"/>
    <property type="match status" value="1"/>
</dbReference>
<evidence type="ECO:0000250" key="1"/>
<evidence type="ECO:0000305" key="2"/>
<feature type="chain" id="PRO_0000063020" description="Chaperone protein HtpG">
    <location>
        <begin position="1"/>
        <end position="391" status="greater than"/>
    </location>
</feature>
<feature type="non-terminal residue">
    <location>
        <position position="391"/>
    </location>
</feature>
<organism>
    <name type="scientific">Aliivibrio fischeri</name>
    <name type="common">Vibrio fischeri</name>
    <dbReference type="NCBI Taxonomy" id="668"/>
    <lineage>
        <taxon>Bacteria</taxon>
        <taxon>Pseudomonadati</taxon>
        <taxon>Pseudomonadota</taxon>
        <taxon>Gammaproteobacteria</taxon>
        <taxon>Vibrionales</taxon>
        <taxon>Vibrionaceae</taxon>
        <taxon>Aliivibrio</taxon>
    </lineage>
</organism>
<keyword id="KW-0067">ATP-binding</keyword>
<keyword id="KW-0143">Chaperone</keyword>
<keyword id="KW-0963">Cytoplasm</keyword>
<keyword id="KW-0547">Nucleotide-binding</keyword>
<keyword id="KW-0346">Stress response</keyword>